<sequence>MRGCTLLLFSEAPFLREQEVAVITAYRNVFIQDDPGMHFRWVIRNAEGQRRWRCRNSEPDAGKVLNTRLASDGPLRQ</sequence>
<accession>Q8FKW2</accession>
<accession>Q8VR97</accession>
<gene>
    <name type="ordered locus">c0279</name>
</gene>
<protein>
    <recommendedName>
        <fullName>UPF0401 protein c0279</fullName>
    </recommendedName>
</protein>
<proteinExistence type="inferred from homology"/>
<keyword id="KW-1185">Reference proteome</keyword>
<name>Y279_ECOL6</name>
<feature type="chain" id="PRO_0000268745" description="UPF0401 protein c0279">
    <location>
        <begin position="1"/>
        <end position="77"/>
    </location>
</feature>
<feature type="sequence conflict" description="In Ref. 1; AAL67351." evidence="1" ref="1">
    <original>N</original>
    <variation>NFALN</variation>
    <location>
        <position position="56"/>
    </location>
</feature>
<comment type="similarity">
    <text evidence="1">Belongs to the UPF0401 family.</text>
</comment>
<comment type="sequence caution" evidence="1">
    <conflict type="frameshift">
        <sequence resource="EMBL-CDS" id="AAL67351"/>
    </conflict>
</comment>
<reference key="1">
    <citation type="journal article" date="2001" name="J. Infect. Dis.">
        <title>Identification of DNA sequences from a second pathogenicity island of uropathogenic Escherichia coli CFT073: probes specific for uropathogenic populations.</title>
        <authorList>
            <person name="Rasko D.A."/>
            <person name="Phillips J.A."/>
            <person name="Li X."/>
            <person name="Mobley H.L."/>
        </authorList>
    </citation>
    <scope>NUCLEOTIDE SEQUENCE [GENOMIC DNA]</scope>
    <source>
        <strain>CFT073 / ATCC 700928 / UPEC</strain>
    </source>
</reference>
<reference key="2">
    <citation type="journal article" date="2002" name="Proc. Natl. Acad. Sci. U.S.A.">
        <title>Extensive mosaic structure revealed by the complete genome sequence of uropathogenic Escherichia coli.</title>
        <authorList>
            <person name="Welch R.A."/>
            <person name="Burland V."/>
            <person name="Plunkett G. III"/>
            <person name="Redford P."/>
            <person name="Roesch P."/>
            <person name="Rasko D."/>
            <person name="Buckles E.L."/>
            <person name="Liou S.-R."/>
            <person name="Boutin A."/>
            <person name="Hackett J."/>
            <person name="Stroud D."/>
            <person name="Mayhew G.F."/>
            <person name="Rose D.J."/>
            <person name="Zhou S."/>
            <person name="Schwartz D.C."/>
            <person name="Perna N.T."/>
            <person name="Mobley H.L.T."/>
            <person name="Donnenberg M.S."/>
            <person name="Blattner F.R."/>
        </authorList>
    </citation>
    <scope>NUCLEOTIDE SEQUENCE [LARGE SCALE GENOMIC DNA]</scope>
    <source>
        <strain>CFT073 / ATCC 700928 / UPEC</strain>
    </source>
</reference>
<evidence type="ECO:0000305" key="1"/>
<dbReference type="EMBL" id="AF447814">
    <property type="protein sequence ID" value="AAL67351.1"/>
    <property type="status" value="ALT_FRAME"/>
    <property type="molecule type" value="Genomic_DNA"/>
</dbReference>
<dbReference type="EMBL" id="AE014075">
    <property type="protein sequence ID" value="AAN78767.1"/>
    <property type="molecule type" value="Genomic_DNA"/>
</dbReference>
<dbReference type="RefSeq" id="WP_001213776.1">
    <property type="nucleotide sequence ID" value="NZ_CP051263.1"/>
</dbReference>
<dbReference type="SMR" id="Q8FKW2"/>
<dbReference type="STRING" id="199310.c0279"/>
<dbReference type="KEGG" id="ecc:c0279"/>
<dbReference type="eggNOG" id="ENOG50332RS">
    <property type="taxonomic scope" value="Bacteria"/>
</dbReference>
<dbReference type="HOGENOM" id="CLU_182912_0_0_6"/>
<dbReference type="BioCyc" id="ECOL199310:C0279-MONOMER"/>
<dbReference type="Proteomes" id="UP000001410">
    <property type="component" value="Chromosome"/>
</dbReference>
<dbReference type="Gene3D" id="3.30.160.130">
    <property type="entry name" value="ykff protein like domains"/>
    <property type="match status" value="1"/>
</dbReference>
<dbReference type="InterPro" id="IPR009253">
    <property type="entry name" value="DUF905"/>
</dbReference>
<dbReference type="InterPro" id="IPR038612">
    <property type="entry name" value="YkfF-like_sf"/>
</dbReference>
<dbReference type="Pfam" id="PF06006">
    <property type="entry name" value="DUF905"/>
    <property type="match status" value="1"/>
</dbReference>
<dbReference type="SUPFAM" id="SSF54786">
    <property type="entry name" value="YcfA/nrd intein domain"/>
    <property type="match status" value="1"/>
</dbReference>
<organism>
    <name type="scientific">Escherichia coli O6:H1 (strain CFT073 / ATCC 700928 / UPEC)</name>
    <dbReference type="NCBI Taxonomy" id="199310"/>
    <lineage>
        <taxon>Bacteria</taxon>
        <taxon>Pseudomonadati</taxon>
        <taxon>Pseudomonadota</taxon>
        <taxon>Gammaproteobacteria</taxon>
        <taxon>Enterobacterales</taxon>
        <taxon>Enterobacteriaceae</taxon>
        <taxon>Escherichia</taxon>
    </lineage>
</organism>